<name>PSTB_WOLSU</name>
<dbReference type="EC" id="7.3.2.1" evidence="1"/>
<dbReference type="EMBL" id="BX571659">
    <property type="protein sequence ID" value="CAE10049.1"/>
    <property type="molecule type" value="Genomic_DNA"/>
</dbReference>
<dbReference type="RefSeq" id="WP_011138845.1">
    <property type="nucleotide sequence ID" value="NC_005090.1"/>
</dbReference>
<dbReference type="SMR" id="Q7M9G3"/>
<dbReference type="STRING" id="273121.WS0945"/>
<dbReference type="KEGG" id="wsu:WS0945"/>
<dbReference type="eggNOG" id="COG1117">
    <property type="taxonomic scope" value="Bacteria"/>
</dbReference>
<dbReference type="HOGENOM" id="CLU_000604_1_22_7"/>
<dbReference type="Proteomes" id="UP000000422">
    <property type="component" value="Chromosome"/>
</dbReference>
<dbReference type="GO" id="GO:0005886">
    <property type="term" value="C:plasma membrane"/>
    <property type="evidence" value="ECO:0007669"/>
    <property type="project" value="UniProtKB-SubCell"/>
</dbReference>
<dbReference type="GO" id="GO:0005524">
    <property type="term" value="F:ATP binding"/>
    <property type="evidence" value="ECO:0007669"/>
    <property type="project" value="UniProtKB-KW"/>
</dbReference>
<dbReference type="GO" id="GO:0016887">
    <property type="term" value="F:ATP hydrolysis activity"/>
    <property type="evidence" value="ECO:0007669"/>
    <property type="project" value="InterPro"/>
</dbReference>
<dbReference type="GO" id="GO:0015415">
    <property type="term" value="F:ATPase-coupled phosphate ion transmembrane transporter activity"/>
    <property type="evidence" value="ECO:0007669"/>
    <property type="project" value="UniProtKB-EC"/>
</dbReference>
<dbReference type="GO" id="GO:0035435">
    <property type="term" value="P:phosphate ion transmembrane transport"/>
    <property type="evidence" value="ECO:0007669"/>
    <property type="project" value="InterPro"/>
</dbReference>
<dbReference type="CDD" id="cd03260">
    <property type="entry name" value="ABC_PstB_phosphate_transporter"/>
    <property type="match status" value="1"/>
</dbReference>
<dbReference type="Gene3D" id="3.40.50.300">
    <property type="entry name" value="P-loop containing nucleotide triphosphate hydrolases"/>
    <property type="match status" value="1"/>
</dbReference>
<dbReference type="InterPro" id="IPR003593">
    <property type="entry name" value="AAA+_ATPase"/>
</dbReference>
<dbReference type="InterPro" id="IPR003439">
    <property type="entry name" value="ABC_transporter-like_ATP-bd"/>
</dbReference>
<dbReference type="InterPro" id="IPR017871">
    <property type="entry name" value="ABC_transporter-like_CS"/>
</dbReference>
<dbReference type="InterPro" id="IPR027417">
    <property type="entry name" value="P-loop_NTPase"/>
</dbReference>
<dbReference type="InterPro" id="IPR005670">
    <property type="entry name" value="PstB-like"/>
</dbReference>
<dbReference type="NCBIfam" id="TIGR00972">
    <property type="entry name" value="3a0107s01c2"/>
    <property type="match status" value="1"/>
</dbReference>
<dbReference type="PANTHER" id="PTHR43423">
    <property type="entry name" value="ABC TRANSPORTER I FAMILY MEMBER 17"/>
    <property type="match status" value="1"/>
</dbReference>
<dbReference type="PANTHER" id="PTHR43423:SF1">
    <property type="entry name" value="ABC TRANSPORTER I FAMILY MEMBER 17"/>
    <property type="match status" value="1"/>
</dbReference>
<dbReference type="Pfam" id="PF00005">
    <property type="entry name" value="ABC_tran"/>
    <property type="match status" value="1"/>
</dbReference>
<dbReference type="SMART" id="SM00382">
    <property type="entry name" value="AAA"/>
    <property type="match status" value="1"/>
</dbReference>
<dbReference type="SUPFAM" id="SSF52540">
    <property type="entry name" value="P-loop containing nucleoside triphosphate hydrolases"/>
    <property type="match status" value="1"/>
</dbReference>
<dbReference type="PROSITE" id="PS00211">
    <property type="entry name" value="ABC_TRANSPORTER_1"/>
    <property type="match status" value="1"/>
</dbReference>
<dbReference type="PROSITE" id="PS50893">
    <property type="entry name" value="ABC_TRANSPORTER_2"/>
    <property type="match status" value="1"/>
</dbReference>
<dbReference type="PROSITE" id="PS51238">
    <property type="entry name" value="PSTB"/>
    <property type="match status" value="1"/>
</dbReference>
<keyword id="KW-0067">ATP-binding</keyword>
<keyword id="KW-0997">Cell inner membrane</keyword>
<keyword id="KW-1003">Cell membrane</keyword>
<keyword id="KW-0472">Membrane</keyword>
<keyword id="KW-0547">Nucleotide-binding</keyword>
<keyword id="KW-0592">Phosphate transport</keyword>
<keyword id="KW-1185">Reference proteome</keyword>
<keyword id="KW-1278">Translocase</keyword>
<keyword id="KW-0813">Transport</keyword>
<evidence type="ECO:0000255" key="1">
    <source>
        <dbReference type="HAMAP-Rule" id="MF_01702"/>
    </source>
</evidence>
<accession>Q7M9G3</accession>
<sequence length="262" mass="29177">MQEAQYLTSDLSVKAKASNLNLWYGQKQALHDINIDIYERKITALIGPSGCGKSTFLRCLNRMNDLVGGCRVEGLVEVDGFNIYDPAIDVVAVRKRVGMVFQQPNPFPKSIYENIAYAPLMHDLVKKGSDCDQLVEESLKGAGLWEEVKDKLKSPGTALSGGQQQRLCIARAIAVKPEIILMDEPTSALDPISTQTIENLMVTLKEQFTIVVVTHNMQQAARVANYTAFFHLGELIEYDETEKIFVSPQKSKTEQYITGKFG</sequence>
<protein>
    <recommendedName>
        <fullName evidence="1">Phosphate import ATP-binding protein PstB</fullName>
        <ecNumber evidence="1">7.3.2.1</ecNumber>
    </recommendedName>
    <alternativeName>
        <fullName evidence="1">ABC phosphate transporter</fullName>
    </alternativeName>
    <alternativeName>
        <fullName evidence="1">Phosphate-transporting ATPase</fullName>
    </alternativeName>
</protein>
<organism>
    <name type="scientific">Wolinella succinogenes (strain ATCC 29543 / DSM 1740 / CCUG 13145 / JCM 31913 / LMG 7466 / NCTC 11488 / FDC 602W)</name>
    <name type="common">Vibrio succinogenes</name>
    <dbReference type="NCBI Taxonomy" id="273121"/>
    <lineage>
        <taxon>Bacteria</taxon>
        <taxon>Pseudomonadati</taxon>
        <taxon>Campylobacterota</taxon>
        <taxon>Epsilonproteobacteria</taxon>
        <taxon>Campylobacterales</taxon>
        <taxon>Helicobacteraceae</taxon>
        <taxon>Wolinella</taxon>
    </lineage>
</organism>
<proteinExistence type="inferred from homology"/>
<comment type="function">
    <text evidence="1">Part of the ABC transporter complex PstSACB involved in phosphate import. Responsible for energy coupling to the transport system.</text>
</comment>
<comment type="catalytic activity">
    <reaction evidence="1">
        <text>phosphate(out) + ATP + H2O = ADP + 2 phosphate(in) + H(+)</text>
        <dbReference type="Rhea" id="RHEA:24440"/>
        <dbReference type="ChEBI" id="CHEBI:15377"/>
        <dbReference type="ChEBI" id="CHEBI:15378"/>
        <dbReference type="ChEBI" id="CHEBI:30616"/>
        <dbReference type="ChEBI" id="CHEBI:43474"/>
        <dbReference type="ChEBI" id="CHEBI:456216"/>
        <dbReference type="EC" id="7.3.2.1"/>
    </reaction>
</comment>
<comment type="subunit">
    <text evidence="1">The complex is composed of two ATP-binding proteins (PstB), two transmembrane proteins (PstC and PstA) and a solute-binding protein (PstS).</text>
</comment>
<comment type="subcellular location">
    <subcellularLocation>
        <location evidence="1">Cell inner membrane</location>
        <topology evidence="1">Peripheral membrane protein</topology>
    </subcellularLocation>
</comment>
<comment type="similarity">
    <text evidence="1">Belongs to the ABC transporter superfamily. Phosphate importer (TC 3.A.1.7) family.</text>
</comment>
<feature type="chain" id="PRO_0000272573" description="Phosphate import ATP-binding protein PstB">
    <location>
        <begin position="1"/>
        <end position="262"/>
    </location>
</feature>
<feature type="domain" description="ABC transporter" evidence="1">
    <location>
        <begin position="15"/>
        <end position="257"/>
    </location>
</feature>
<feature type="binding site" evidence="1">
    <location>
        <begin position="47"/>
        <end position="54"/>
    </location>
    <ligand>
        <name>ATP</name>
        <dbReference type="ChEBI" id="CHEBI:30616"/>
    </ligand>
</feature>
<reference key="1">
    <citation type="journal article" date="2003" name="Proc. Natl. Acad. Sci. U.S.A.">
        <title>Complete genome sequence and analysis of Wolinella succinogenes.</title>
        <authorList>
            <person name="Baar C."/>
            <person name="Eppinger M."/>
            <person name="Raddatz G."/>
            <person name="Simon J."/>
            <person name="Lanz C."/>
            <person name="Klimmek O."/>
            <person name="Nandakumar R."/>
            <person name="Gross R."/>
            <person name="Rosinus A."/>
            <person name="Keller H."/>
            <person name="Jagtap P."/>
            <person name="Linke B."/>
            <person name="Meyer F."/>
            <person name="Lederer H."/>
            <person name="Schuster S.C."/>
        </authorList>
    </citation>
    <scope>NUCLEOTIDE SEQUENCE [LARGE SCALE GENOMIC DNA]</scope>
    <source>
        <strain>ATCC 29543 / DSM 1740 / CCUG 13145 / JCM 31913 / LMG 7466 / NCTC 11488 / FDC 602W</strain>
    </source>
</reference>
<gene>
    <name evidence="1" type="primary">pstB</name>
    <name type="ordered locus">WS0945</name>
</gene>